<protein>
    <recommendedName>
        <fullName>Acryloyl-CoA reductase electron transfer subunit beta</fullName>
    </recommendedName>
    <alternativeName>
        <fullName>Electron transfer flavoprotein large subunit</fullName>
        <shortName>ETFLS</shortName>
    </alternativeName>
    <alternativeName>
        <fullName>Electron transfer flavoprotein subunit beta</fullName>
        <shortName>Beta-ETF</shortName>
    </alternativeName>
</protein>
<reference key="1">
    <citation type="submission" date="2011-07" db="EMBL/GenBank/DDBJ databases">
        <authorList>
            <person name="Poehlein A."/>
            <person name="Schlien K."/>
            <person name="Daniel R."/>
            <person name="Gottschalk G."/>
            <person name="Buckel W."/>
        </authorList>
    </citation>
    <scope>NUCLEOTIDE SEQUENCE [GENOMIC DNA]</scope>
    <source>
        <strain>ATCC 25522 / DSM 1682 / JCM 1430 / NCIMB 10656 / VPI 5303 / X2</strain>
    </source>
</reference>
<reference key="2">
    <citation type="journal article" date="2013" name="Appl. Microbiol. Biotechnol.">
        <title>Engineering Escherichia coli with acrylate pathway genes for propionic acid synthesis and its impact on mixed-acid fermentation.</title>
        <authorList>
            <person name="Kandasamy V."/>
            <person name="Vaidyanathan H."/>
            <person name="Djurdjevic I."/>
            <person name="Jayamani E."/>
            <person name="Ramachandran K.B."/>
            <person name="Buckel W."/>
            <person name="Jayaraman G."/>
            <person name="Ramalingam S."/>
        </authorList>
    </citation>
    <scope>NUCLEOTIDE SEQUENCE [GENOMIC DNA]</scope>
    <source>
        <strain>ATCC 25522 / DSM 1682 / JCM 1430 / NCIMB 10656 / VPI 5303 / X2</strain>
    </source>
</reference>
<reference key="3">
    <citation type="journal article" date="2003" name="Eur. J. Biochem.">
        <title>Acryloyl-CoA reductase from Clostridium propionicum. An enzyme complex of propionyl-CoA dehydrogenase and electron-transferring flavoprotein.</title>
        <authorList>
            <person name="Hetzel M."/>
            <person name="Brock M."/>
            <person name="Selmer T."/>
            <person name="Pierik A.J."/>
            <person name="Golding B.T."/>
            <person name="Buckel W."/>
        </authorList>
    </citation>
    <scope>FUNCTION</scope>
    <scope>SUBCELLULAR LOCATION</scope>
    <scope>MASS SPECTROMETRY</scope>
    <scope>SUBUNIT</scope>
    <source>
        <strain>ATCC 25522 / DSM 1682 / JCM 1430 / NCIMB 10656 / VPI 5303 / X2</strain>
    </source>
</reference>
<evidence type="ECO:0000255" key="1"/>
<evidence type="ECO:0000269" key="2">
    <source>
    </source>
</evidence>
<evidence type="ECO:0000305" key="3"/>
<sequence>MAFNSADINSFRDIWVFCEQREGKLINTDFELISEGRKLADERGSKLVGILLGHEVEEIAKELGGYGADKVIVCDHPELKFYTTDAYAKVLCDVVMEEKPEVILIGATNIGRDLGPRCAARLHTGLTADCTHLDIDMNKYVDFLSTSSTLDISSMTFPMEDTNLKMTRPAFGGHLMATIICPRFRPCMSTVRPGVMKKAEFSQEMAQACQVVTRHVNLSDEDLKTKVINIVKETKKIVDLIGAEIIVSVGRGISKDVQGGIALAEKLADAFGNGVVGGSRAVIDSGWLPADHQVGQTGKTVHPKVYVALGISGAIQHKAGMQDSELIIAVNKDETAPIFDCADYGITGDLFKIVPMMIDAIKEGKNA</sequence>
<proteinExistence type="evidence at protein level"/>
<organism>
    <name type="scientific">Anaerotignum propionicum</name>
    <name type="common">Clostridium propionicum</name>
    <dbReference type="NCBI Taxonomy" id="28446"/>
    <lineage>
        <taxon>Bacteria</taxon>
        <taxon>Bacillati</taxon>
        <taxon>Bacillota</taxon>
        <taxon>Clostridia</taxon>
        <taxon>Lachnospirales</taxon>
        <taxon>Anaerotignaceae</taxon>
        <taxon>Anaerotignum</taxon>
    </lineage>
</organism>
<name>ETFA_ANAPI</name>
<keyword id="KW-0963">Cytoplasm</keyword>
<keyword id="KW-0249">Electron transport</keyword>
<keyword id="KW-0813">Transport</keyword>
<feature type="chain" id="PRO_0000424268" description="Acryloyl-CoA reductase electron transfer subunit beta">
    <location>
        <begin position="1"/>
        <end position="367"/>
    </location>
</feature>
<feature type="binding site" evidence="1">
    <location>
        <begin position="305"/>
        <end position="333"/>
    </location>
    <ligand>
        <name>FAD</name>
        <dbReference type="ChEBI" id="CHEBI:57692"/>
    </ligand>
</feature>
<accession>G3KIM6</accession>
<dbReference type="EMBL" id="JN244654">
    <property type="protein sequence ID" value="AEM62996.1"/>
    <property type="molecule type" value="Genomic_DNA"/>
</dbReference>
<dbReference type="RefSeq" id="WP_066051465.1">
    <property type="nucleotide sequence ID" value="NZ_JAYFOE010000007.1"/>
</dbReference>
<dbReference type="SMR" id="G3KIM6"/>
<dbReference type="BioCyc" id="MetaCyc:MONOMER-12758"/>
<dbReference type="BRENDA" id="1.3.1.95">
    <property type="organism ID" value="1504"/>
</dbReference>
<dbReference type="SABIO-RK" id="G3KIM6"/>
<dbReference type="GO" id="GO:0005737">
    <property type="term" value="C:cytoplasm"/>
    <property type="evidence" value="ECO:0000314"/>
    <property type="project" value="UniProtKB"/>
</dbReference>
<dbReference type="GO" id="GO:0009055">
    <property type="term" value="F:electron transfer activity"/>
    <property type="evidence" value="ECO:0007669"/>
    <property type="project" value="InterPro"/>
</dbReference>
<dbReference type="GO" id="GO:0050660">
    <property type="term" value="F:flavin adenine dinucleotide binding"/>
    <property type="evidence" value="ECO:0007669"/>
    <property type="project" value="InterPro"/>
</dbReference>
<dbReference type="GO" id="GO:0016628">
    <property type="term" value="F:oxidoreductase activity, acting on the CH-CH group of donors, NAD or NADP as acceptor"/>
    <property type="evidence" value="ECO:0000314"/>
    <property type="project" value="UniProtKB"/>
</dbReference>
<dbReference type="GO" id="GO:0033539">
    <property type="term" value="P:fatty acid beta-oxidation using acyl-CoA dehydrogenase"/>
    <property type="evidence" value="ECO:0007669"/>
    <property type="project" value="TreeGrafter"/>
</dbReference>
<dbReference type="CDD" id="cd01715">
    <property type="entry name" value="ETF_alpha"/>
    <property type="match status" value="1"/>
</dbReference>
<dbReference type="FunFam" id="3.40.50.1220:FF:000035">
    <property type="entry name" value="Electron transfer flavoprotein alpha subunit apoprotein"/>
    <property type="match status" value="1"/>
</dbReference>
<dbReference type="FunFam" id="3.40.50.620:FF:000161">
    <property type="entry name" value="Electron transfer flavoprotein subunit alpha"/>
    <property type="match status" value="1"/>
</dbReference>
<dbReference type="Gene3D" id="3.40.50.620">
    <property type="entry name" value="HUPs"/>
    <property type="match status" value="1"/>
</dbReference>
<dbReference type="Gene3D" id="3.40.50.1220">
    <property type="entry name" value="TPP-binding domain"/>
    <property type="match status" value="1"/>
</dbReference>
<dbReference type="InterPro" id="IPR029035">
    <property type="entry name" value="DHS-like_NAD/FAD-binding_dom"/>
</dbReference>
<dbReference type="InterPro" id="IPR014730">
    <property type="entry name" value="ETF_a/b_N"/>
</dbReference>
<dbReference type="InterPro" id="IPR001308">
    <property type="entry name" value="ETF_a/FixB"/>
</dbReference>
<dbReference type="InterPro" id="IPR033947">
    <property type="entry name" value="ETF_alpha_N"/>
</dbReference>
<dbReference type="InterPro" id="IPR014731">
    <property type="entry name" value="ETF_asu_C"/>
</dbReference>
<dbReference type="InterPro" id="IPR050041">
    <property type="entry name" value="ETF_beta"/>
</dbReference>
<dbReference type="InterPro" id="IPR014729">
    <property type="entry name" value="Rossmann-like_a/b/a_fold"/>
</dbReference>
<dbReference type="NCBIfam" id="NF042970">
    <property type="entry name" value="AcrlCoAredClosAcrA"/>
    <property type="match status" value="1"/>
</dbReference>
<dbReference type="PANTHER" id="PTHR43153">
    <property type="entry name" value="ELECTRON TRANSFER FLAVOPROTEIN ALPHA"/>
    <property type="match status" value="1"/>
</dbReference>
<dbReference type="PANTHER" id="PTHR43153:SF1">
    <property type="entry name" value="ELECTRON TRANSFER FLAVOPROTEIN SUBUNIT ALPHA, MITOCHONDRIAL"/>
    <property type="match status" value="1"/>
</dbReference>
<dbReference type="Pfam" id="PF01012">
    <property type="entry name" value="ETF"/>
    <property type="match status" value="1"/>
</dbReference>
<dbReference type="Pfam" id="PF00766">
    <property type="entry name" value="ETF_alpha"/>
    <property type="match status" value="1"/>
</dbReference>
<dbReference type="PIRSF" id="PIRSF000089">
    <property type="entry name" value="Electra_flavoP_a"/>
    <property type="match status" value="1"/>
</dbReference>
<dbReference type="SMART" id="SM00893">
    <property type="entry name" value="ETF"/>
    <property type="match status" value="1"/>
</dbReference>
<dbReference type="SUPFAM" id="SSF52402">
    <property type="entry name" value="Adenine nucleotide alpha hydrolases-like"/>
    <property type="match status" value="1"/>
</dbReference>
<dbReference type="SUPFAM" id="SSF52467">
    <property type="entry name" value="DHS-like NAD/FAD-binding domain"/>
    <property type="match status" value="1"/>
</dbReference>
<gene>
    <name type="primary">acrA</name>
</gene>
<comment type="function">
    <text evidence="2">Part of the ETF-acryloyl-CoA reductase complex involved in the pathway of L-alanine fermentation. The electron transfer flavoprotein (ETF) serves as a specific electron acceptor for acryloyl-CoA reductase.</text>
</comment>
<comment type="subunit">
    <text evidence="2">Heterohexadecamer; tetramer of tetramers. Each tetramer is composed of 2 alpha (AcrC), a beta (AcrA) and a gamma (AcrB) subunit.</text>
</comment>
<comment type="subcellular location">
    <subcellularLocation>
        <location evidence="2">Cytoplasm</location>
    </subcellularLocation>
</comment>
<comment type="mass spectrometry"/>
<comment type="similarity">
    <text evidence="3">Belongs to the ETF alpha-subunit/FixB family.</text>
</comment>